<dbReference type="EC" id="2.7.2.3" evidence="2"/>
<dbReference type="EMBL" id="AF346500">
    <property type="protein sequence ID" value="AAO17214.1"/>
    <property type="molecule type" value="Genomic_DNA"/>
</dbReference>
<dbReference type="SMR" id="Q8GF87"/>
<dbReference type="STRING" id="29488.KS18_06655"/>
<dbReference type="OrthoDB" id="9808460at2"/>
<dbReference type="UniPathway" id="UPA00109">
    <property type="reaction ID" value="UER00185"/>
</dbReference>
<dbReference type="GO" id="GO:0005829">
    <property type="term" value="C:cytosol"/>
    <property type="evidence" value="ECO:0007669"/>
    <property type="project" value="TreeGrafter"/>
</dbReference>
<dbReference type="GO" id="GO:0043531">
    <property type="term" value="F:ADP binding"/>
    <property type="evidence" value="ECO:0007669"/>
    <property type="project" value="TreeGrafter"/>
</dbReference>
<dbReference type="GO" id="GO:0005524">
    <property type="term" value="F:ATP binding"/>
    <property type="evidence" value="ECO:0007669"/>
    <property type="project" value="UniProtKB-KW"/>
</dbReference>
<dbReference type="GO" id="GO:0004618">
    <property type="term" value="F:phosphoglycerate kinase activity"/>
    <property type="evidence" value="ECO:0007669"/>
    <property type="project" value="UniProtKB-UniRule"/>
</dbReference>
<dbReference type="GO" id="GO:0006094">
    <property type="term" value="P:gluconeogenesis"/>
    <property type="evidence" value="ECO:0007669"/>
    <property type="project" value="TreeGrafter"/>
</dbReference>
<dbReference type="GO" id="GO:0006096">
    <property type="term" value="P:glycolytic process"/>
    <property type="evidence" value="ECO:0007669"/>
    <property type="project" value="UniProtKB-UniRule"/>
</dbReference>
<dbReference type="FunFam" id="3.40.50.1260:FF:000001">
    <property type="entry name" value="Phosphoglycerate kinase"/>
    <property type="match status" value="1"/>
</dbReference>
<dbReference type="FunFam" id="3.40.50.1260:FF:000002">
    <property type="entry name" value="Phosphoglycerate kinase"/>
    <property type="match status" value="1"/>
</dbReference>
<dbReference type="Gene3D" id="3.40.50.1260">
    <property type="entry name" value="Phosphoglycerate kinase, N-terminal domain"/>
    <property type="match status" value="2"/>
</dbReference>
<dbReference type="HAMAP" id="MF_00145">
    <property type="entry name" value="Phosphoglyc_kinase"/>
    <property type="match status" value="1"/>
</dbReference>
<dbReference type="InterPro" id="IPR001576">
    <property type="entry name" value="Phosphoglycerate_kinase"/>
</dbReference>
<dbReference type="InterPro" id="IPR015911">
    <property type="entry name" value="Phosphoglycerate_kinase_CS"/>
</dbReference>
<dbReference type="InterPro" id="IPR015824">
    <property type="entry name" value="Phosphoglycerate_kinase_N"/>
</dbReference>
<dbReference type="InterPro" id="IPR036043">
    <property type="entry name" value="Phosphoglycerate_kinase_sf"/>
</dbReference>
<dbReference type="PANTHER" id="PTHR11406">
    <property type="entry name" value="PHOSPHOGLYCERATE KINASE"/>
    <property type="match status" value="1"/>
</dbReference>
<dbReference type="PANTHER" id="PTHR11406:SF23">
    <property type="entry name" value="PHOSPHOGLYCERATE KINASE 1, CHLOROPLASTIC-RELATED"/>
    <property type="match status" value="1"/>
</dbReference>
<dbReference type="Pfam" id="PF00162">
    <property type="entry name" value="PGK"/>
    <property type="match status" value="1"/>
</dbReference>
<dbReference type="PIRSF" id="PIRSF000724">
    <property type="entry name" value="Pgk"/>
    <property type="match status" value="1"/>
</dbReference>
<dbReference type="PRINTS" id="PR00477">
    <property type="entry name" value="PHGLYCKINASE"/>
</dbReference>
<dbReference type="SUPFAM" id="SSF53748">
    <property type="entry name" value="Phosphoglycerate kinase"/>
    <property type="match status" value="1"/>
</dbReference>
<dbReference type="PROSITE" id="PS00111">
    <property type="entry name" value="PGLYCERATE_KINASE"/>
    <property type="match status" value="1"/>
</dbReference>
<sequence length="387" mass="41455">MSVIKMTDLDLAGKRVLIRADLNVPVKDGKVTSDARIRASLPTIEAALKQGAKVMITSHLGRPIEGEYNEEFSLKPVVDYLKEKLSSSVRLEKEYLEGVEVSEGELVVLENVRFNKGEKKDDESLAKKYASLCDIYVMDAFGTAHRAQASTHGVAKFAPVACAGPLLFGELEALGKALDNPARPMVAIVGGSKVSTKLTVLDTLSKIADQLIVGGGIANTFVAAEGHNVGRSLYEDDLIPEAKKLLISCDIPVPTDVRVATEFSETAEATLKSSSDIKDDEQILDLGDESAQRLADILKNAKTILWNGPVGVFEFPNFRQGTEIVARAIADSDAFSIAGGGDTLAAIDLFGIADKISYISTGGGAFLEFVEGKKLPAVVMLEERAKQ</sequence>
<proteinExistence type="inferred from homology"/>
<protein>
    <recommendedName>
        <fullName evidence="2">Phosphoglycerate kinase</fullName>
        <ecNumber evidence="2">2.7.2.3</ecNumber>
    </recommendedName>
</protein>
<comment type="catalytic activity">
    <reaction evidence="2">
        <text>(2R)-3-phosphoglycerate + ATP = (2R)-3-phospho-glyceroyl phosphate + ADP</text>
        <dbReference type="Rhea" id="RHEA:14801"/>
        <dbReference type="ChEBI" id="CHEBI:30616"/>
        <dbReference type="ChEBI" id="CHEBI:57604"/>
        <dbReference type="ChEBI" id="CHEBI:58272"/>
        <dbReference type="ChEBI" id="CHEBI:456216"/>
        <dbReference type="EC" id="2.7.2.3"/>
    </reaction>
</comment>
<comment type="pathway">
    <text evidence="2">Carbohydrate degradation; glycolysis; pyruvate from D-glyceraldehyde 3-phosphate: step 2/5.</text>
</comment>
<comment type="subunit">
    <text evidence="2">Monomer.</text>
</comment>
<comment type="subcellular location">
    <subcellularLocation>
        <location evidence="2">Cytoplasm</location>
    </subcellularLocation>
</comment>
<comment type="similarity">
    <text evidence="2">Belongs to the phosphoglycerate kinase family.</text>
</comment>
<name>PGK_PHOLU</name>
<reference key="1">
    <citation type="journal article" date="2002" name="Trends Microbiol.">
        <title>Genomic islands in Photorhabdus.</title>
        <authorList>
            <person name="Waterfield N.R."/>
            <person name="Daborn P.J."/>
            <person name="ffrench-Constant R.H."/>
        </authorList>
    </citation>
    <scope>NUCLEOTIDE SEQUENCE [GENOMIC DNA]</scope>
    <source>
        <strain>W14</strain>
    </source>
</reference>
<keyword id="KW-0067">ATP-binding</keyword>
<keyword id="KW-0963">Cytoplasm</keyword>
<keyword id="KW-0324">Glycolysis</keyword>
<keyword id="KW-0418">Kinase</keyword>
<keyword id="KW-0547">Nucleotide-binding</keyword>
<keyword id="KW-0808">Transferase</keyword>
<organism>
    <name type="scientific">Photorhabdus luminescens</name>
    <name type="common">Xenorhabdus luminescens</name>
    <dbReference type="NCBI Taxonomy" id="29488"/>
    <lineage>
        <taxon>Bacteria</taxon>
        <taxon>Pseudomonadati</taxon>
        <taxon>Pseudomonadota</taxon>
        <taxon>Gammaproteobacteria</taxon>
        <taxon>Enterobacterales</taxon>
        <taxon>Morganellaceae</taxon>
        <taxon>Photorhabdus</taxon>
    </lineage>
</organism>
<gene>
    <name evidence="2" type="primary">pgk</name>
</gene>
<accession>Q8GF87</accession>
<feature type="initiator methionine" description="Removed" evidence="1">
    <location>
        <position position="1"/>
    </location>
</feature>
<feature type="chain" id="PRO_0000145982" description="Phosphoglycerate kinase">
    <location>
        <begin position="2"/>
        <end position="387"/>
    </location>
</feature>
<feature type="binding site" evidence="2">
    <location>
        <begin position="21"/>
        <end position="23"/>
    </location>
    <ligand>
        <name>substrate</name>
    </ligand>
</feature>
<feature type="binding site" evidence="2">
    <location>
        <position position="36"/>
    </location>
    <ligand>
        <name>substrate</name>
    </ligand>
</feature>
<feature type="binding site" evidence="2">
    <location>
        <begin position="59"/>
        <end position="62"/>
    </location>
    <ligand>
        <name>substrate</name>
    </ligand>
</feature>
<feature type="binding site" evidence="2">
    <location>
        <position position="113"/>
    </location>
    <ligand>
        <name>substrate</name>
    </ligand>
</feature>
<feature type="binding site" evidence="2">
    <location>
        <position position="146"/>
    </location>
    <ligand>
        <name>substrate</name>
    </ligand>
</feature>
<feature type="binding site" evidence="2">
    <location>
        <position position="197"/>
    </location>
    <ligand>
        <name>ATP</name>
        <dbReference type="ChEBI" id="CHEBI:30616"/>
    </ligand>
</feature>
<feature type="binding site" evidence="2">
    <location>
        <position position="314"/>
    </location>
    <ligand>
        <name>ATP</name>
        <dbReference type="ChEBI" id="CHEBI:30616"/>
    </ligand>
</feature>
<feature type="binding site" evidence="2">
    <location>
        <begin position="340"/>
        <end position="343"/>
    </location>
    <ligand>
        <name>ATP</name>
        <dbReference type="ChEBI" id="CHEBI:30616"/>
    </ligand>
</feature>
<evidence type="ECO:0000250" key="1"/>
<evidence type="ECO:0000255" key="2">
    <source>
        <dbReference type="HAMAP-Rule" id="MF_00145"/>
    </source>
</evidence>